<keyword id="KW-0143">Chaperone</keyword>
<keyword id="KW-0963">Cytoplasm</keyword>
<keyword id="KW-0342">GTP-binding</keyword>
<keyword id="KW-0996">Nickel insertion</keyword>
<keyword id="KW-0547">Nucleotide-binding</keyword>
<sequence length="204" mass="22942">MTKRTVIIGVGGPVGSGKTLLLERLTRRMSDLNLAVITNDIYTKEDALFLAKNSSLDEDRIIGVETGGCPHTAIREDASMNFEAIETLQERFNHDLDVIFLESGGDNLAATFSPDLVDFTIYIIDVAQGEKIPRKAGQGMIKSDLFLINKTDLAPYVGANLDRMREDTLHFRNEDSFIFTNLNNDDNVKEVEEWIRKNFLLEDL</sequence>
<feature type="chain" id="PRO_0000067673" description="Urease accessory protein UreG">
    <location>
        <begin position="1"/>
        <end position="204"/>
    </location>
</feature>
<feature type="binding site" evidence="1">
    <location>
        <begin position="12"/>
        <end position="19"/>
    </location>
    <ligand>
        <name>GTP</name>
        <dbReference type="ChEBI" id="CHEBI:37565"/>
    </ligand>
</feature>
<gene>
    <name evidence="1" type="primary">ureG</name>
    <name type="ordered locus">Ssal_01896</name>
</gene>
<reference key="1">
    <citation type="journal article" date="1996" name="Infect. Immun.">
        <title>Streptococcus salivarius urease: genetic and biochemical characterization and expression in a dental plaque streptococcus.</title>
        <authorList>
            <person name="Chen Y.-Y.M."/>
            <person name="Clancy K.A."/>
            <person name="Burne R.A."/>
        </authorList>
    </citation>
    <scope>NUCLEOTIDE SEQUENCE [GENOMIC DNA]</scope>
    <source>
        <strain>57.I</strain>
    </source>
</reference>
<reference key="2">
    <citation type="journal article" date="2011" name="J. Bacteriol.">
        <title>Complete genome sequence of the ureolytic Streptococcus salivarius strain 57.I.</title>
        <authorList>
            <person name="Geng J."/>
            <person name="Huang S.C."/>
            <person name="Li S."/>
            <person name="Hu S."/>
            <person name="Chen Y.Y."/>
        </authorList>
    </citation>
    <scope>NUCLEOTIDE SEQUENCE [LARGE SCALE GENOMIC DNA]</scope>
    <source>
        <strain>57.I</strain>
    </source>
</reference>
<protein>
    <recommendedName>
        <fullName evidence="1">Urease accessory protein UreG</fullName>
    </recommendedName>
</protein>
<evidence type="ECO:0000255" key="1">
    <source>
        <dbReference type="HAMAP-Rule" id="MF_01389"/>
    </source>
</evidence>
<name>UREG_STRE5</name>
<proteinExistence type="inferred from homology"/>
<comment type="function">
    <text evidence="1">Facilitates the functional incorporation of the urease nickel metallocenter. This process requires GTP hydrolysis, probably effectuated by UreG.</text>
</comment>
<comment type="subunit">
    <text evidence="1">Homodimer. UreD, UreF and UreG form a complex that acts as a GTP-hydrolysis-dependent molecular chaperone, activating the urease apoprotein by helping to assemble the nickel containing metallocenter of UreC. The UreE protein probably delivers the nickel.</text>
</comment>
<comment type="subcellular location">
    <subcellularLocation>
        <location evidence="1">Cytoplasm</location>
    </subcellularLocation>
</comment>
<comment type="similarity">
    <text evidence="1">Belongs to the SIMIBI class G3E GTPase family. UreG subfamily.</text>
</comment>
<organism>
    <name type="scientific">Streptococcus salivarius (strain 57.I)</name>
    <dbReference type="NCBI Taxonomy" id="1046629"/>
    <lineage>
        <taxon>Bacteria</taxon>
        <taxon>Bacillati</taxon>
        <taxon>Bacillota</taxon>
        <taxon>Bacilli</taxon>
        <taxon>Lactobacillales</taxon>
        <taxon>Streptococcaceae</taxon>
        <taxon>Streptococcus</taxon>
    </lineage>
</organism>
<accession>Q55057</accession>
<accession>F8HGJ7</accession>
<dbReference type="EMBL" id="U35248">
    <property type="protein sequence ID" value="AAC43567.1"/>
    <property type="molecule type" value="Genomic_DNA"/>
</dbReference>
<dbReference type="EMBL" id="CP002888">
    <property type="protein sequence ID" value="AEJ54133.1"/>
    <property type="molecule type" value="Genomic_DNA"/>
</dbReference>
<dbReference type="RefSeq" id="WP_002889928.1">
    <property type="nucleotide sequence ID" value="NC_017594.1"/>
</dbReference>
<dbReference type="SMR" id="Q55057"/>
<dbReference type="GeneID" id="93791475"/>
<dbReference type="KEGG" id="stf:Ssal_01896"/>
<dbReference type="PATRIC" id="fig|1046629.4.peg.1683"/>
<dbReference type="eggNOG" id="COG0378">
    <property type="taxonomic scope" value="Bacteria"/>
</dbReference>
<dbReference type="GO" id="GO:0005737">
    <property type="term" value="C:cytoplasm"/>
    <property type="evidence" value="ECO:0007669"/>
    <property type="project" value="UniProtKB-SubCell"/>
</dbReference>
<dbReference type="GO" id="GO:0005525">
    <property type="term" value="F:GTP binding"/>
    <property type="evidence" value="ECO:0007669"/>
    <property type="project" value="UniProtKB-KW"/>
</dbReference>
<dbReference type="GO" id="GO:0003924">
    <property type="term" value="F:GTPase activity"/>
    <property type="evidence" value="ECO:0007669"/>
    <property type="project" value="InterPro"/>
</dbReference>
<dbReference type="GO" id="GO:0016151">
    <property type="term" value="F:nickel cation binding"/>
    <property type="evidence" value="ECO:0007669"/>
    <property type="project" value="UniProtKB-UniRule"/>
</dbReference>
<dbReference type="GO" id="GO:0043419">
    <property type="term" value="P:urea catabolic process"/>
    <property type="evidence" value="ECO:0007669"/>
    <property type="project" value="InterPro"/>
</dbReference>
<dbReference type="CDD" id="cd05540">
    <property type="entry name" value="UreG"/>
    <property type="match status" value="1"/>
</dbReference>
<dbReference type="Gene3D" id="3.40.50.300">
    <property type="entry name" value="P-loop containing nucleotide triphosphate hydrolases"/>
    <property type="match status" value="1"/>
</dbReference>
<dbReference type="HAMAP" id="MF_01389">
    <property type="entry name" value="UreG"/>
    <property type="match status" value="1"/>
</dbReference>
<dbReference type="InterPro" id="IPR003495">
    <property type="entry name" value="CobW/HypB/UreG_nucleotide-bd"/>
</dbReference>
<dbReference type="InterPro" id="IPR027417">
    <property type="entry name" value="P-loop_NTPase"/>
</dbReference>
<dbReference type="InterPro" id="IPR004400">
    <property type="entry name" value="UreG"/>
</dbReference>
<dbReference type="NCBIfam" id="TIGR00101">
    <property type="entry name" value="ureG"/>
    <property type="match status" value="1"/>
</dbReference>
<dbReference type="PANTHER" id="PTHR31715">
    <property type="entry name" value="UREASE ACCESSORY PROTEIN G"/>
    <property type="match status" value="1"/>
</dbReference>
<dbReference type="PANTHER" id="PTHR31715:SF0">
    <property type="entry name" value="UREASE ACCESSORY PROTEIN G"/>
    <property type="match status" value="1"/>
</dbReference>
<dbReference type="Pfam" id="PF02492">
    <property type="entry name" value="cobW"/>
    <property type="match status" value="1"/>
</dbReference>
<dbReference type="PIRSF" id="PIRSF005624">
    <property type="entry name" value="Ni-bind_GTPase"/>
    <property type="match status" value="1"/>
</dbReference>
<dbReference type="SUPFAM" id="SSF52540">
    <property type="entry name" value="P-loop containing nucleoside triphosphate hydrolases"/>
    <property type="match status" value="1"/>
</dbReference>